<gene>
    <name evidence="1" type="primary">rpsC</name>
    <name type="ordered locus">Bcep18194_A3453</name>
</gene>
<evidence type="ECO:0000255" key="1">
    <source>
        <dbReference type="HAMAP-Rule" id="MF_01309"/>
    </source>
</evidence>
<evidence type="ECO:0000256" key="2">
    <source>
        <dbReference type="SAM" id="MobiDB-lite"/>
    </source>
</evidence>
<evidence type="ECO:0000305" key="3"/>
<protein>
    <recommendedName>
        <fullName evidence="1">Small ribosomal subunit protein uS3</fullName>
    </recommendedName>
    <alternativeName>
        <fullName evidence="3">30S ribosomal protein S3</fullName>
    </alternativeName>
</protein>
<name>RS3_BURL3</name>
<proteinExistence type="inferred from homology"/>
<reference key="1">
    <citation type="submission" date="2005-10" db="EMBL/GenBank/DDBJ databases">
        <title>Complete sequence of chromosome 1 of Burkholderia sp. 383.</title>
        <authorList>
            <consortium name="US DOE Joint Genome Institute"/>
            <person name="Copeland A."/>
            <person name="Lucas S."/>
            <person name="Lapidus A."/>
            <person name="Barry K."/>
            <person name="Detter J.C."/>
            <person name="Glavina T."/>
            <person name="Hammon N."/>
            <person name="Israni S."/>
            <person name="Pitluck S."/>
            <person name="Chain P."/>
            <person name="Malfatti S."/>
            <person name="Shin M."/>
            <person name="Vergez L."/>
            <person name="Schmutz J."/>
            <person name="Larimer F."/>
            <person name="Land M."/>
            <person name="Kyrpides N."/>
            <person name="Lykidis A."/>
            <person name="Richardson P."/>
        </authorList>
    </citation>
    <scope>NUCLEOTIDE SEQUENCE [LARGE SCALE GENOMIC DNA]</scope>
    <source>
        <strain>ATCC 17760 / DSM 23089 / LMG 22485 / NCIMB 9086 / R18194 / 383</strain>
    </source>
</reference>
<comment type="function">
    <text evidence="1">Binds the lower part of the 30S subunit head. Binds mRNA in the 70S ribosome, positioning it for translation.</text>
</comment>
<comment type="subunit">
    <text evidence="1">Part of the 30S ribosomal subunit. Forms a tight complex with proteins S10 and S14.</text>
</comment>
<comment type="similarity">
    <text evidence="1">Belongs to the universal ribosomal protein uS3 family.</text>
</comment>
<dbReference type="EMBL" id="CP000151">
    <property type="protein sequence ID" value="ABB07055.1"/>
    <property type="molecule type" value="Genomic_DNA"/>
</dbReference>
<dbReference type="RefSeq" id="WP_006482899.1">
    <property type="nucleotide sequence ID" value="NZ_WNDV01000034.1"/>
</dbReference>
<dbReference type="SMR" id="Q39KG1"/>
<dbReference type="GeneID" id="98107154"/>
<dbReference type="KEGG" id="bur:Bcep18194_A3453"/>
<dbReference type="HOGENOM" id="CLU_058591_0_2_4"/>
<dbReference type="Proteomes" id="UP000002705">
    <property type="component" value="Chromosome 1"/>
</dbReference>
<dbReference type="GO" id="GO:0022627">
    <property type="term" value="C:cytosolic small ribosomal subunit"/>
    <property type="evidence" value="ECO:0007669"/>
    <property type="project" value="TreeGrafter"/>
</dbReference>
<dbReference type="GO" id="GO:0003729">
    <property type="term" value="F:mRNA binding"/>
    <property type="evidence" value="ECO:0007669"/>
    <property type="project" value="UniProtKB-UniRule"/>
</dbReference>
<dbReference type="GO" id="GO:0019843">
    <property type="term" value="F:rRNA binding"/>
    <property type="evidence" value="ECO:0007669"/>
    <property type="project" value="UniProtKB-UniRule"/>
</dbReference>
<dbReference type="GO" id="GO:0003735">
    <property type="term" value="F:structural constituent of ribosome"/>
    <property type="evidence" value="ECO:0007669"/>
    <property type="project" value="InterPro"/>
</dbReference>
<dbReference type="GO" id="GO:0006412">
    <property type="term" value="P:translation"/>
    <property type="evidence" value="ECO:0007669"/>
    <property type="project" value="UniProtKB-UniRule"/>
</dbReference>
<dbReference type="CDD" id="cd02412">
    <property type="entry name" value="KH-II_30S_S3"/>
    <property type="match status" value="1"/>
</dbReference>
<dbReference type="FunFam" id="3.30.1140.32:FF:000006">
    <property type="entry name" value="30S ribosomal protein S3"/>
    <property type="match status" value="1"/>
</dbReference>
<dbReference type="FunFam" id="3.30.300.20:FF:000001">
    <property type="entry name" value="30S ribosomal protein S3"/>
    <property type="match status" value="1"/>
</dbReference>
<dbReference type="Gene3D" id="3.30.300.20">
    <property type="match status" value="1"/>
</dbReference>
<dbReference type="Gene3D" id="3.30.1140.32">
    <property type="entry name" value="Ribosomal protein S3, C-terminal domain"/>
    <property type="match status" value="1"/>
</dbReference>
<dbReference type="HAMAP" id="MF_01309_B">
    <property type="entry name" value="Ribosomal_uS3_B"/>
    <property type="match status" value="1"/>
</dbReference>
<dbReference type="InterPro" id="IPR004087">
    <property type="entry name" value="KH_dom"/>
</dbReference>
<dbReference type="InterPro" id="IPR015946">
    <property type="entry name" value="KH_dom-like_a/b"/>
</dbReference>
<dbReference type="InterPro" id="IPR004044">
    <property type="entry name" value="KH_dom_type_2"/>
</dbReference>
<dbReference type="InterPro" id="IPR009019">
    <property type="entry name" value="KH_sf_prok-type"/>
</dbReference>
<dbReference type="InterPro" id="IPR036419">
    <property type="entry name" value="Ribosomal_S3_C_sf"/>
</dbReference>
<dbReference type="InterPro" id="IPR005704">
    <property type="entry name" value="Ribosomal_uS3_bac-typ"/>
</dbReference>
<dbReference type="InterPro" id="IPR001351">
    <property type="entry name" value="Ribosomal_uS3_C"/>
</dbReference>
<dbReference type="InterPro" id="IPR018280">
    <property type="entry name" value="Ribosomal_uS3_CS"/>
</dbReference>
<dbReference type="NCBIfam" id="TIGR01009">
    <property type="entry name" value="rpsC_bact"/>
    <property type="match status" value="1"/>
</dbReference>
<dbReference type="PANTHER" id="PTHR11760">
    <property type="entry name" value="30S/40S RIBOSOMAL PROTEIN S3"/>
    <property type="match status" value="1"/>
</dbReference>
<dbReference type="PANTHER" id="PTHR11760:SF19">
    <property type="entry name" value="SMALL RIBOSOMAL SUBUNIT PROTEIN US3C"/>
    <property type="match status" value="1"/>
</dbReference>
<dbReference type="Pfam" id="PF07650">
    <property type="entry name" value="KH_2"/>
    <property type="match status" value="1"/>
</dbReference>
<dbReference type="Pfam" id="PF00189">
    <property type="entry name" value="Ribosomal_S3_C"/>
    <property type="match status" value="1"/>
</dbReference>
<dbReference type="SMART" id="SM00322">
    <property type="entry name" value="KH"/>
    <property type="match status" value="1"/>
</dbReference>
<dbReference type="SUPFAM" id="SSF54814">
    <property type="entry name" value="Prokaryotic type KH domain (KH-domain type II)"/>
    <property type="match status" value="1"/>
</dbReference>
<dbReference type="SUPFAM" id="SSF54821">
    <property type="entry name" value="Ribosomal protein S3 C-terminal domain"/>
    <property type="match status" value="1"/>
</dbReference>
<dbReference type="PROSITE" id="PS50823">
    <property type="entry name" value="KH_TYPE_2"/>
    <property type="match status" value="1"/>
</dbReference>
<dbReference type="PROSITE" id="PS00548">
    <property type="entry name" value="RIBOSOMAL_S3"/>
    <property type="match status" value="1"/>
</dbReference>
<organism>
    <name type="scientific">Burkholderia lata (strain ATCC 17760 / DSM 23089 / LMG 22485 / NCIMB 9086 / R18194 / 383)</name>
    <dbReference type="NCBI Taxonomy" id="482957"/>
    <lineage>
        <taxon>Bacteria</taxon>
        <taxon>Pseudomonadati</taxon>
        <taxon>Pseudomonadota</taxon>
        <taxon>Betaproteobacteria</taxon>
        <taxon>Burkholderiales</taxon>
        <taxon>Burkholderiaceae</taxon>
        <taxon>Burkholderia</taxon>
        <taxon>Burkholderia cepacia complex</taxon>
    </lineage>
</organism>
<feature type="chain" id="PRO_0000230685" description="Small ribosomal subunit protein uS3">
    <location>
        <begin position="1"/>
        <end position="266"/>
    </location>
</feature>
<feature type="domain" description="KH type-2" evidence="1">
    <location>
        <begin position="39"/>
        <end position="107"/>
    </location>
</feature>
<feature type="region of interest" description="Disordered" evidence="2">
    <location>
        <begin position="218"/>
        <end position="266"/>
    </location>
</feature>
<feature type="compositionally biased region" description="Basic and acidic residues" evidence="2">
    <location>
        <begin position="230"/>
        <end position="241"/>
    </location>
</feature>
<feature type="compositionally biased region" description="Basic and acidic residues" evidence="2">
    <location>
        <begin position="257"/>
        <end position="266"/>
    </location>
</feature>
<accession>Q39KG1</accession>
<keyword id="KW-0687">Ribonucleoprotein</keyword>
<keyword id="KW-0689">Ribosomal protein</keyword>
<keyword id="KW-0694">RNA-binding</keyword>
<keyword id="KW-0699">rRNA-binding</keyword>
<sequence>MGQKIHPTGFRLAVSRNWASRWYANNNNFAAMLQEDIGVREYLKKKLKNASVGRVVIERPAKNARITIYSSRPGVVIGKKGEDIEQLKTELQRRMGVPVHVNIEEIRKPETDAQLIADSITQQLERRIMFRRAMKRAMQNAMRLGAQGIKIMSAGRLNGIEIARTEWYREGRVPLHTLRADIDYATSEAKTTYGIIGVKVWVYKGDTLGRNDAPVVEEVAEDKRPRRNARPGDRRPRRDGEGGAPGARRGAPRRGAGKPEDGKTGE</sequence>